<sequence length="355" mass="42437">MYNFVKIFRSNFIDINAANKLEIFLKTILRIYKTPARTHLLAHAADISAIYAVREIYNYMKNDEEGRIILKEKPLLIRQDIQFNELKKLPKNTLGYKYMEFLETYKLHAHDREVSHFFTDLNYSYILTRYRQIHDIGHVVYNLNISIESEAALKVIELVQTKLPITALAILIAPLMTPLYRFQYIFKDSIPSNFLTPNFDYTYNDAYNYVDELSIKQYEYNLTDYFHVDKRDDQKFYSKMYQYYLDNINNSSAVRGSIIYGFENKSNNDIIYDHPNREYIFLKNLKKKHLLFQYKPRKNLLRELYPWAYMAGVSTTKPLHSIHIEKWLDKDIDLFRRTYNISPLPDHLNLMAGIN</sequence>
<evidence type="ECO:0000255" key="1">
    <source>
        <dbReference type="HAMAP-Rule" id="MF_03111"/>
    </source>
</evidence>
<comment type="function">
    <text evidence="1">Lyase that catalyzes the C1-decarboxylation of 4-hydroxy-3-methoxy-5-(all-trans-polyprenyl)benzoic acid into 2-methoxy-6-(all-trans-polyprenyl)phenol during ubiquinone biosynthesis.</text>
</comment>
<comment type="catalytic activity">
    <reaction evidence="1">
        <text>a 4-hydroxy-3-methoxy-5-(all-trans-polyprenyl)benzoate + H(+) = a 2-methoxy-6-(all-trans-polyprenyl)phenol + CO2</text>
        <dbReference type="Rhea" id="RHEA:81179"/>
        <dbReference type="Rhea" id="RHEA-COMP:9551"/>
        <dbReference type="Rhea" id="RHEA-COMP:10931"/>
        <dbReference type="ChEBI" id="CHEBI:15378"/>
        <dbReference type="ChEBI" id="CHEBI:16526"/>
        <dbReference type="ChEBI" id="CHEBI:62731"/>
        <dbReference type="ChEBI" id="CHEBI:84443"/>
        <dbReference type="EC" id="4.1.1.130"/>
    </reaction>
</comment>
<comment type="cofactor">
    <cofactor evidence="1">
        <name>Zn(2+)</name>
        <dbReference type="ChEBI" id="CHEBI:29105"/>
    </cofactor>
</comment>
<comment type="pathway">
    <text evidence="1">Cofactor biosynthesis; ubiquinone biosynthesis.</text>
</comment>
<comment type="subunit">
    <text evidence="1">Component of a multi-subunit COQ enzyme complex.</text>
</comment>
<comment type="subcellular location">
    <subcellularLocation>
        <location evidence="1">Mitochondrion inner membrane</location>
        <topology evidence="1">Peripheral membrane protein</topology>
        <orientation evidence="1">Matrix side</orientation>
    </subcellularLocation>
</comment>
<comment type="miscellaneous">
    <text evidence="1">This protein may be expected to contain an N-terminal transit peptide but none has been predicted.</text>
</comment>
<comment type="similarity">
    <text evidence="1">Belongs to the COQ4 family.</text>
</comment>
<organism>
    <name type="scientific">Plasmodium knowlesi (strain H)</name>
    <dbReference type="NCBI Taxonomy" id="5851"/>
    <lineage>
        <taxon>Eukaryota</taxon>
        <taxon>Sar</taxon>
        <taxon>Alveolata</taxon>
        <taxon>Apicomplexa</taxon>
        <taxon>Aconoidasida</taxon>
        <taxon>Haemosporida</taxon>
        <taxon>Plasmodiidae</taxon>
        <taxon>Plasmodium</taxon>
        <taxon>Plasmodium (Plasmodium)</taxon>
    </lineage>
</organism>
<reference key="1">
    <citation type="journal article" date="2008" name="Nature">
        <title>The genome of the simian and human malaria parasite Plasmodium knowlesi.</title>
        <authorList>
            <person name="Pain A."/>
            <person name="Boehme U."/>
            <person name="Berry A.E."/>
            <person name="Mungall K."/>
            <person name="Finn R.D."/>
            <person name="Jackson A.P."/>
            <person name="Mourier T."/>
            <person name="Mistry J."/>
            <person name="Pasini E.M."/>
            <person name="Aslett M.A."/>
            <person name="Balasubrammaniam S."/>
            <person name="Borgwardt K."/>
            <person name="Brooks K."/>
            <person name="Carret C."/>
            <person name="Carver T.J."/>
            <person name="Cherevach I."/>
            <person name="Chillingworth T."/>
            <person name="Clark T.G."/>
            <person name="Galinski M.R."/>
            <person name="Hall N."/>
            <person name="Harper D."/>
            <person name="Harris D."/>
            <person name="Hauser H."/>
            <person name="Ivens A."/>
            <person name="Janssen C.S."/>
            <person name="Keane T."/>
            <person name="Larke N."/>
            <person name="Lapp S."/>
            <person name="Marti M."/>
            <person name="Moule S."/>
            <person name="Meyer I.M."/>
            <person name="Ormond D."/>
            <person name="Peters N."/>
            <person name="Sanders M."/>
            <person name="Sanders S."/>
            <person name="Sargeant T.J."/>
            <person name="Simmonds M."/>
            <person name="Smith F."/>
            <person name="Squares R."/>
            <person name="Thurston S."/>
            <person name="Tivey A.R."/>
            <person name="Walker D."/>
            <person name="White B."/>
            <person name="Zuiderwijk E."/>
            <person name="Churcher C."/>
            <person name="Quail M.A."/>
            <person name="Cowman A.F."/>
            <person name="Turner C.M.R."/>
            <person name="Rajandream M.A."/>
            <person name="Kocken C.H.M."/>
            <person name="Thomas A.W."/>
            <person name="Newbold C.I."/>
            <person name="Barrell B.G."/>
            <person name="Berriman M."/>
        </authorList>
    </citation>
    <scope>NUCLEOTIDE SEQUENCE [LARGE SCALE GENOMIC DNA]</scope>
    <source>
        <strain>H</strain>
    </source>
</reference>
<keyword id="KW-0456">Lyase</keyword>
<keyword id="KW-0472">Membrane</keyword>
<keyword id="KW-0479">Metal-binding</keyword>
<keyword id="KW-0496">Mitochondrion</keyword>
<keyword id="KW-0999">Mitochondrion inner membrane</keyword>
<keyword id="KW-1185">Reference proteome</keyword>
<keyword id="KW-0831">Ubiquinone biosynthesis</keyword>
<keyword id="KW-0862">Zinc</keyword>
<protein>
    <recommendedName>
        <fullName evidence="1">Ubiquinone biosynthesis protein COQ4 homolog, mitochondrial</fullName>
    </recommendedName>
    <alternativeName>
        <fullName>4-hydroxy-3-methoxy-5-polyprenylbenzoate decarboxylase</fullName>
        <ecNumber evidence="1">4.1.1.130</ecNumber>
    </alternativeName>
    <alternativeName>
        <fullName evidence="1">Coenzyme Q biosynthesis protein 4 homolog</fullName>
    </alternativeName>
</protein>
<gene>
    <name type="ORF">PKH_090950</name>
</gene>
<accession>B3L4S4</accession>
<proteinExistence type="inferred from homology"/>
<dbReference type="EC" id="4.1.1.130" evidence="1"/>
<dbReference type="EMBL" id="AM910991">
    <property type="protein sequence ID" value="CAQ39895.1"/>
    <property type="molecule type" value="Genomic_DNA"/>
</dbReference>
<dbReference type="RefSeq" id="XP_002259122.1">
    <property type="nucleotide sequence ID" value="XM_002259086.1"/>
</dbReference>
<dbReference type="STRING" id="5851.B3L4S4"/>
<dbReference type="EnsemblProtists" id="CAQ39895">
    <property type="protein sequence ID" value="CAQ39895"/>
    <property type="gene ID" value="PKH_090950"/>
</dbReference>
<dbReference type="GeneID" id="7320684"/>
<dbReference type="KEGG" id="pkn:PKNH_0909900"/>
<dbReference type="VEuPathDB" id="PlasmoDB:PKNH_0909900"/>
<dbReference type="HOGENOM" id="CLU_781859_0_0_1"/>
<dbReference type="InParanoid" id="B3L4S4"/>
<dbReference type="OMA" id="QIHDIGH"/>
<dbReference type="OrthoDB" id="4249at2759"/>
<dbReference type="PhylomeDB" id="B3L4S4"/>
<dbReference type="UniPathway" id="UPA00232"/>
<dbReference type="Proteomes" id="UP000031513">
    <property type="component" value="Chromosome 9"/>
</dbReference>
<dbReference type="GO" id="GO:0031314">
    <property type="term" value="C:extrinsic component of mitochondrial inner membrane"/>
    <property type="evidence" value="ECO:0007669"/>
    <property type="project" value="UniProtKB-UniRule"/>
</dbReference>
<dbReference type="GO" id="GO:0006744">
    <property type="term" value="P:ubiquinone biosynthetic process"/>
    <property type="evidence" value="ECO:0007669"/>
    <property type="project" value="UniProtKB-UniRule"/>
</dbReference>
<dbReference type="HAMAP" id="MF_03111">
    <property type="entry name" value="Coq4"/>
    <property type="match status" value="1"/>
</dbReference>
<dbReference type="InterPro" id="IPR007715">
    <property type="entry name" value="Coq4"/>
</dbReference>
<dbReference type="InterPro" id="IPR027540">
    <property type="entry name" value="Coq4_euk"/>
</dbReference>
<dbReference type="PANTHER" id="PTHR12922">
    <property type="entry name" value="UBIQUINONE BIOSYNTHESIS PROTEIN"/>
    <property type="match status" value="1"/>
</dbReference>
<dbReference type="PANTHER" id="PTHR12922:SF7">
    <property type="entry name" value="UBIQUINONE BIOSYNTHESIS PROTEIN COQ4 HOMOLOG, MITOCHONDRIAL"/>
    <property type="match status" value="1"/>
</dbReference>
<dbReference type="Pfam" id="PF05019">
    <property type="entry name" value="Coq4"/>
    <property type="match status" value="1"/>
</dbReference>
<name>COQ4_PLAKH</name>
<feature type="chain" id="PRO_0000388080" description="Ubiquinone biosynthesis protein COQ4 homolog, mitochondrial">
    <location>
        <begin position="1"/>
        <end position="355"/>
    </location>
</feature>
<feature type="binding site" evidence="1">
    <location>
        <position position="134"/>
    </location>
    <ligand>
        <name>Zn(2+)</name>
        <dbReference type="ChEBI" id="CHEBI:29105"/>
    </ligand>
</feature>
<feature type="binding site" evidence="1">
    <location>
        <position position="135"/>
    </location>
    <ligand>
        <name>Zn(2+)</name>
        <dbReference type="ChEBI" id="CHEBI:29105"/>
    </ligand>
</feature>
<feature type="binding site" evidence="1">
    <location>
        <position position="138"/>
    </location>
    <ligand>
        <name>Zn(2+)</name>
        <dbReference type="ChEBI" id="CHEBI:29105"/>
    </ligand>
</feature>
<feature type="binding site" evidence="1">
    <location>
        <position position="150"/>
    </location>
    <ligand>
        <name>Zn(2+)</name>
        <dbReference type="ChEBI" id="CHEBI:29105"/>
    </ligand>
</feature>